<gene>
    <name evidence="1" type="primary">folD</name>
    <name type="ordered locus">MSC_0758</name>
</gene>
<accession>Q6MSL3</accession>
<keyword id="KW-0028">Amino-acid biosynthesis</keyword>
<keyword id="KW-0368">Histidine biosynthesis</keyword>
<keyword id="KW-0378">Hydrolase</keyword>
<keyword id="KW-0486">Methionine biosynthesis</keyword>
<keyword id="KW-0511">Multifunctional enzyme</keyword>
<keyword id="KW-0521">NADP</keyword>
<keyword id="KW-0554">One-carbon metabolism</keyword>
<keyword id="KW-0560">Oxidoreductase</keyword>
<keyword id="KW-0658">Purine biosynthesis</keyword>
<keyword id="KW-1185">Reference proteome</keyword>
<feature type="chain" id="PRO_0000268408" description="Bifunctional protein FolD">
    <location>
        <begin position="1"/>
        <end position="288"/>
    </location>
</feature>
<feature type="binding site" evidence="1">
    <location>
        <begin position="164"/>
        <end position="166"/>
    </location>
    <ligand>
        <name>NADP(+)</name>
        <dbReference type="ChEBI" id="CHEBI:58349"/>
    </ligand>
</feature>
<feature type="binding site" evidence="1">
    <location>
        <position position="230"/>
    </location>
    <ligand>
        <name>NADP(+)</name>
        <dbReference type="ChEBI" id="CHEBI:58349"/>
    </ligand>
</feature>
<reference key="1">
    <citation type="journal article" date="2004" name="Genome Res.">
        <title>The genome sequence of Mycoplasma mycoides subsp. mycoides SC type strain PG1T, the causative agent of contagious bovine pleuropneumonia (CBPP).</title>
        <authorList>
            <person name="Westberg J."/>
            <person name="Persson A."/>
            <person name="Holmberg A."/>
            <person name="Goesmann A."/>
            <person name="Lundeberg J."/>
            <person name="Johansson K.-E."/>
            <person name="Pettersson B."/>
            <person name="Uhlen M."/>
        </authorList>
    </citation>
    <scope>NUCLEOTIDE SEQUENCE [LARGE SCALE GENOMIC DNA]</scope>
    <source>
        <strain>CCUG 32753 / NCTC 10114 / PG1</strain>
    </source>
</reference>
<proteinExistence type="inferred from homology"/>
<comment type="function">
    <text evidence="1">Catalyzes the oxidation of 5,10-methylenetetrahydrofolate to 5,10-methenyltetrahydrofolate and then the hydrolysis of 5,10-methenyltetrahydrofolate to 10-formyltetrahydrofolate.</text>
</comment>
<comment type="catalytic activity">
    <reaction evidence="1">
        <text>(6R)-5,10-methylene-5,6,7,8-tetrahydrofolate + NADP(+) = (6R)-5,10-methenyltetrahydrofolate + NADPH</text>
        <dbReference type="Rhea" id="RHEA:22812"/>
        <dbReference type="ChEBI" id="CHEBI:15636"/>
        <dbReference type="ChEBI" id="CHEBI:57455"/>
        <dbReference type="ChEBI" id="CHEBI:57783"/>
        <dbReference type="ChEBI" id="CHEBI:58349"/>
        <dbReference type="EC" id="1.5.1.5"/>
    </reaction>
</comment>
<comment type="catalytic activity">
    <reaction evidence="1">
        <text>(6R)-5,10-methenyltetrahydrofolate + H2O = (6R)-10-formyltetrahydrofolate + H(+)</text>
        <dbReference type="Rhea" id="RHEA:23700"/>
        <dbReference type="ChEBI" id="CHEBI:15377"/>
        <dbReference type="ChEBI" id="CHEBI:15378"/>
        <dbReference type="ChEBI" id="CHEBI:57455"/>
        <dbReference type="ChEBI" id="CHEBI:195366"/>
        <dbReference type="EC" id="3.5.4.9"/>
    </reaction>
</comment>
<comment type="pathway">
    <text evidence="1">One-carbon metabolism; tetrahydrofolate interconversion.</text>
</comment>
<comment type="subunit">
    <text evidence="1">Homodimer.</text>
</comment>
<comment type="similarity">
    <text evidence="1">Belongs to the tetrahydrofolate dehydrogenase/cyclohydrolase family.</text>
</comment>
<comment type="sequence caution" evidence="2">
    <conflict type="erroneous termination">
        <sequence resource="EMBL-CDS" id="CAE77376"/>
    </conflict>
    <text>Truncated C-terminus.</text>
</comment>
<organism>
    <name type="scientific">Mycoplasma mycoides subsp. mycoides SC (strain CCUG 32753 / NCTC 10114 / PG1)</name>
    <dbReference type="NCBI Taxonomy" id="272632"/>
    <lineage>
        <taxon>Bacteria</taxon>
        <taxon>Bacillati</taxon>
        <taxon>Mycoplasmatota</taxon>
        <taxon>Mollicutes</taxon>
        <taxon>Mycoplasmataceae</taxon>
        <taxon>Mycoplasma</taxon>
    </lineage>
</organism>
<dbReference type="EC" id="1.5.1.5" evidence="1"/>
<dbReference type="EC" id="3.5.4.9" evidence="1"/>
<dbReference type="EMBL" id="BX293980">
    <property type="protein sequence ID" value="CAE77376.1"/>
    <property type="status" value="ALT_SEQ"/>
    <property type="molecule type" value="Genomic_DNA"/>
</dbReference>
<dbReference type="RefSeq" id="NP_975734.1">
    <property type="nucleotide sequence ID" value="NC_005364.2"/>
</dbReference>
<dbReference type="SMR" id="Q6MSL3"/>
<dbReference type="STRING" id="272632.MSC_0758"/>
<dbReference type="KEGG" id="mmy:MSC_0758"/>
<dbReference type="PATRIC" id="fig|272632.4.peg.815"/>
<dbReference type="eggNOG" id="COG0190">
    <property type="taxonomic scope" value="Bacteria"/>
</dbReference>
<dbReference type="HOGENOM" id="CLU_034045_4_0_14"/>
<dbReference type="UniPathway" id="UPA00193"/>
<dbReference type="Proteomes" id="UP000001016">
    <property type="component" value="Chromosome"/>
</dbReference>
<dbReference type="GO" id="GO:0005829">
    <property type="term" value="C:cytosol"/>
    <property type="evidence" value="ECO:0007669"/>
    <property type="project" value="TreeGrafter"/>
</dbReference>
<dbReference type="GO" id="GO:0004477">
    <property type="term" value="F:methenyltetrahydrofolate cyclohydrolase activity"/>
    <property type="evidence" value="ECO:0007669"/>
    <property type="project" value="UniProtKB-UniRule"/>
</dbReference>
<dbReference type="GO" id="GO:0004488">
    <property type="term" value="F:methylenetetrahydrofolate dehydrogenase (NADP+) activity"/>
    <property type="evidence" value="ECO:0007669"/>
    <property type="project" value="UniProtKB-UniRule"/>
</dbReference>
<dbReference type="GO" id="GO:0000105">
    <property type="term" value="P:L-histidine biosynthetic process"/>
    <property type="evidence" value="ECO:0007669"/>
    <property type="project" value="UniProtKB-KW"/>
</dbReference>
<dbReference type="GO" id="GO:0009086">
    <property type="term" value="P:methionine biosynthetic process"/>
    <property type="evidence" value="ECO:0007669"/>
    <property type="project" value="UniProtKB-KW"/>
</dbReference>
<dbReference type="GO" id="GO:0006164">
    <property type="term" value="P:purine nucleotide biosynthetic process"/>
    <property type="evidence" value="ECO:0007669"/>
    <property type="project" value="UniProtKB-KW"/>
</dbReference>
<dbReference type="GO" id="GO:0035999">
    <property type="term" value="P:tetrahydrofolate interconversion"/>
    <property type="evidence" value="ECO:0007669"/>
    <property type="project" value="UniProtKB-UniRule"/>
</dbReference>
<dbReference type="CDD" id="cd01080">
    <property type="entry name" value="NAD_bind_m-THF_DH_Cyclohyd"/>
    <property type="match status" value="1"/>
</dbReference>
<dbReference type="FunFam" id="3.40.50.720:FF:000094">
    <property type="entry name" value="Bifunctional protein FolD"/>
    <property type="match status" value="1"/>
</dbReference>
<dbReference type="FunFam" id="3.40.50.10860:FF:000005">
    <property type="entry name" value="C-1-tetrahydrofolate synthase, cytoplasmic, putative"/>
    <property type="match status" value="1"/>
</dbReference>
<dbReference type="Gene3D" id="3.40.50.10860">
    <property type="entry name" value="Leucine Dehydrogenase, chain A, domain 1"/>
    <property type="match status" value="1"/>
</dbReference>
<dbReference type="Gene3D" id="3.40.50.720">
    <property type="entry name" value="NAD(P)-binding Rossmann-like Domain"/>
    <property type="match status" value="1"/>
</dbReference>
<dbReference type="HAMAP" id="MF_01576">
    <property type="entry name" value="THF_DHG_CYH"/>
    <property type="match status" value="1"/>
</dbReference>
<dbReference type="InterPro" id="IPR046346">
    <property type="entry name" value="Aminoacid_DH-like_N_sf"/>
</dbReference>
<dbReference type="InterPro" id="IPR036291">
    <property type="entry name" value="NAD(P)-bd_dom_sf"/>
</dbReference>
<dbReference type="InterPro" id="IPR000672">
    <property type="entry name" value="THF_DH/CycHdrlase"/>
</dbReference>
<dbReference type="InterPro" id="IPR020630">
    <property type="entry name" value="THF_DH/CycHdrlase_cat_dom"/>
</dbReference>
<dbReference type="InterPro" id="IPR020867">
    <property type="entry name" value="THF_DH/CycHdrlase_CS"/>
</dbReference>
<dbReference type="InterPro" id="IPR020631">
    <property type="entry name" value="THF_DH/CycHdrlase_NAD-bd_dom"/>
</dbReference>
<dbReference type="PANTHER" id="PTHR48099:SF5">
    <property type="entry name" value="C-1-TETRAHYDROFOLATE SYNTHASE, CYTOPLASMIC"/>
    <property type="match status" value="1"/>
</dbReference>
<dbReference type="PANTHER" id="PTHR48099">
    <property type="entry name" value="C-1-TETRAHYDROFOLATE SYNTHASE, CYTOPLASMIC-RELATED"/>
    <property type="match status" value="1"/>
</dbReference>
<dbReference type="Pfam" id="PF00763">
    <property type="entry name" value="THF_DHG_CYH"/>
    <property type="match status" value="1"/>
</dbReference>
<dbReference type="Pfam" id="PF02882">
    <property type="entry name" value="THF_DHG_CYH_C"/>
    <property type="match status" value="1"/>
</dbReference>
<dbReference type="PRINTS" id="PR00085">
    <property type="entry name" value="THFDHDRGNASE"/>
</dbReference>
<dbReference type="SUPFAM" id="SSF53223">
    <property type="entry name" value="Aminoacid dehydrogenase-like, N-terminal domain"/>
    <property type="match status" value="1"/>
</dbReference>
<dbReference type="SUPFAM" id="SSF51735">
    <property type="entry name" value="NAD(P)-binding Rossmann-fold domains"/>
    <property type="match status" value="1"/>
</dbReference>
<dbReference type="PROSITE" id="PS00767">
    <property type="entry name" value="THF_DHG_CYH_2"/>
    <property type="match status" value="1"/>
</dbReference>
<name>FOLD_MYCMS</name>
<evidence type="ECO:0000255" key="1">
    <source>
        <dbReference type="HAMAP-Rule" id="MF_01576"/>
    </source>
</evidence>
<evidence type="ECO:0000305" key="2"/>
<sequence length="288" mass="32102">MVILDGKLVSKQIKQTLKKQIDTYLNKNYKKPKLAVILIGNDPASELYVSNKIKACNLVGIESVLLRFGQNITSEMLSDQINQLNNDNSVDAILLQLPLPKHLDEQEFLQAIDPLKDVDGFHYINQGKMLEGYDTIYPCTPIGIINLLKAYNIDVRSKDITIIGTSNIVGKPLAIMLSNMGATISMCNKNTKSLKKYTKRSDIVISTTGKQALIKKDMIKKNAIVIDVGIIKDPITNKIVGDVDFENVKELCSYITPVPGGVGPMTVSMLLENTFKLYKLHIKENYEN</sequence>
<protein>
    <recommendedName>
        <fullName evidence="1">Bifunctional protein FolD</fullName>
    </recommendedName>
    <domain>
        <recommendedName>
            <fullName evidence="1">Methylenetetrahydrofolate dehydrogenase</fullName>
            <ecNumber evidence="1">1.5.1.5</ecNumber>
        </recommendedName>
    </domain>
    <domain>
        <recommendedName>
            <fullName evidence="1">Methenyltetrahydrofolate cyclohydrolase</fullName>
            <ecNumber evidence="1">3.5.4.9</ecNumber>
        </recommendedName>
    </domain>
</protein>